<proteinExistence type="evidence at protein level"/>
<feature type="chain" id="PRO_0000080683" description="Ubiquitin carboxyl-terminal hydrolase 17-like protein A">
    <location>
        <begin position="1"/>
        <end position="526"/>
    </location>
</feature>
<feature type="domain" description="USP">
    <location>
        <begin position="51"/>
        <end position="348"/>
    </location>
</feature>
<feature type="region of interest" description="Disordered" evidence="3">
    <location>
        <begin position="1"/>
        <end position="21"/>
    </location>
</feature>
<feature type="region of interest" description="Disordered" evidence="3">
    <location>
        <begin position="374"/>
        <end position="394"/>
    </location>
</feature>
<feature type="region of interest" description="Disordered" evidence="3">
    <location>
        <begin position="465"/>
        <end position="494"/>
    </location>
</feature>
<feature type="compositionally biased region" description="Basic residues" evidence="3">
    <location>
        <begin position="374"/>
        <end position="385"/>
    </location>
</feature>
<feature type="compositionally biased region" description="Basic and acidic residues" evidence="3">
    <location>
        <begin position="473"/>
        <end position="486"/>
    </location>
</feature>
<feature type="active site" description="Nucleophile">
    <location>
        <position position="60"/>
    </location>
</feature>
<feature type="active site" description="Proton acceptor" evidence="1 2">
    <location>
        <position position="307"/>
    </location>
</feature>
<feature type="mutagenesis site" description="Loss of activity." evidence="5">
    <original>C</original>
    <variation>S</variation>
    <location>
        <position position="60"/>
    </location>
</feature>
<keyword id="KW-0378">Hydrolase</keyword>
<keyword id="KW-0645">Protease</keyword>
<keyword id="KW-1185">Reference proteome</keyword>
<keyword id="KW-0788">Thiol protease</keyword>
<keyword id="KW-0832">Ubl conjugation</keyword>
<keyword id="KW-0833">Ubl conjugation pathway</keyword>
<sequence length="526" mass="59073">MVVALSFPEADPALSSPDAPELHQDEAQVVEELTVNGKHSLSWESPQGPGCGLQNTGNSCYLNAALQCLTHTPPLADYMLSQEHSQTCCSPEGCKLCAMEALVTQSLLHSHSGDVMKPSHILTSAFHKHQQEDAHEFLMFTLETMHESCLQVHRQSKPTSEDSSPIHDIFGGWWRSQIKCLLCQGTSDTYDRFLDIPLDISSAQSVKQALWDTEKSEELCGDNAYYCGKCRQKMPASKTLHVHIAPKVLMVVLNRFSAFTGNKLDRKVSYPEFLDLKPYLSEPTGGPLPYALYAVLVHDGATSHSGHYFCCVKAGHGKWYKMDDTKVTRCDVTSVLNENAYVLFYVQQANLKQVSIDMPEGRINEVLDPEYQLKKSRRKKHKKKSPFTEDLGEPCENRDKRAIKETSLGKGKVLQEVNHKKAGQKHGNTKLMPQKQNHQKAGQNLRNTEVELDLPADAIVIHQPRSTANWGRDSPDKENQPLHNADRLLTSQGPVNTWQLCRQEGRRRSKKGQNKNKQGQRLLLVC</sequence>
<protein>
    <recommendedName>
        <fullName>Ubiquitin carboxyl-terminal hydrolase 17-like protein A</fullName>
        <shortName>USP17-A</shortName>
        <ecNumber>3.4.19.12</ecNumber>
    </recommendedName>
    <alternativeName>
        <fullName>Deubiquitinating enzyme 1</fullName>
    </alternativeName>
    <alternativeName>
        <fullName>Ubiquitin carboxyl-terminal hydrolase DUB-1</fullName>
    </alternativeName>
    <alternativeName>
        <fullName>Ubiquitin thioesterase DUB-1</fullName>
    </alternativeName>
    <alternativeName>
        <fullName>Ubiquitin-specific-processing protease DUB-1</fullName>
    </alternativeName>
</protein>
<dbReference type="EC" id="3.4.19.12"/>
<dbReference type="EMBL" id="U41636">
    <property type="protein sequence ID" value="AAC52532.1"/>
    <property type="molecule type" value="mRNA"/>
</dbReference>
<dbReference type="CCDS" id="CCDS21629.1"/>
<dbReference type="PIR" id="JC6133">
    <property type="entry name" value="JC6133"/>
</dbReference>
<dbReference type="RefSeq" id="NP_031913.1">
    <property type="nucleotide sequence ID" value="NM_007887.2"/>
</dbReference>
<dbReference type="SMR" id="Q61068"/>
<dbReference type="BioGRID" id="199337">
    <property type="interactions" value="2"/>
</dbReference>
<dbReference type="FunCoup" id="Q61068">
    <property type="interactions" value="250"/>
</dbReference>
<dbReference type="STRING" id="10090.ENSMUSP00000068997"/>
<dbReference type="MEROPS" id="C19.031"/>
<dbReference type="PaxDb" id="10090-ENSMUSP00000068997"/>
<dbReference type="DNASU" id="13531"/>
<dbReference type="Ensembl" id="ENSMUST00000067695.8">
    <property type="protein sequence ID" value="ENSMUSP00000068997.8"/>
    <property type="gene ID" value="ENSMUSG00000054568.8"/>
</dbReference>
<dbReference type="GeneID" id="13531"/>
<dbReference type="KEGG" id="mmu:13531"/>
<dbReference type="UCSC" id="uc009iwz.2">
    <property type="organism name" value="mouse"/>
</dbReference>
<dbReference type="AGR" id="MGI:107699"/>
<dbReference type="CTD" id="13531"/>
<dbReference type="MGI" id="MGI:107699">
    <property type="gene designation" value="Usp17la"/>
</dbReference>
<dbReference type="VEuPathDB" id="HostDB:ENSMUSG00000054568"/>
<dbReference type="eggNOG" id="KOG1865">
    <property type="taxonomic scope" value="Eukaryota"/>
</dbReference>
<dbReference type="GeneTree" id="ENSGT00940000162665"/>
<dbReference type="HOGENOM" id="CLU_008279_10_0_1"/>
<dbReference type="InParanoid" id="Q61068"/>
<dbReference type="OMA" id="CKLCAME"/>
<dbReference type="OrthoDB" id="420187at2759"/>
<dbReference type="PhylomeDB" id="Q61068"/>
<dbReference type="TreeFam" id="TF315281"/>
<dbReference type="Reactome" id="R-MMU-5689880">
    <property type="pathway name" value="Ub-specific processing proteases"/>
</dbReference>
<dbReference type="Reactome" id="R-MMU-9648002">
    <property type="pathway name" value="RAS processing"/>
</dbReference>
<dbReference type="BioGRID-ORCS" id="13531">
    <property type="hits" value="4 hits in 76 CRISPR screens"/>
</dbReference>
<dbReference type="PRO" id="PR:Q61068"/>
<dbReference type="Proteomes" id="UP000000589">
    <property type="component" value="Chromosome 7"/>
</dbReference>
<dbReference type="RNAct" id="Q61068">
    <property type="molecule type" value="protein"/>
</dbReference>
<dbReference type="Bgee" id="ENSMUSG00000054568">
    <property type="expression patterns" value="Expressed in cleaving embryo and 5 other cell types or tissues"/>
</dbReference>
<dbReference type="GO" id="GO:0004843">
    <property type="term" value="F:cysteine-type deubiquitinase activity"/>
    <property type="evidence" value="ECO:0000314"/>
    <property type="project" value="MGI"/>
</dbReference>
<dbReference type="GO" id="GO:0106222">
    <property type="term" value="F:lncRNA binding"/>
    <property type="evidence" value="ECO:0000314"/>
    <property type="project" value="MGI"/>
</dbReference>
<dbReference type="GO" id="GO:0016579">
    <property type="term" value="P:protein deubiquitination"/>
    <property type="evidence" value="ECO:0000314"/>
    <property type="project" value="MGI"/>
</dbReference>
<dbReference type="GO" id="GO:0006508">
    <property type="term" value="P:proteolysis"/>
    <property type="evidence" value="ECO:0007669"/>
    <property type="project" value="UniProtKB-KW"/>
</dbReference>
<dbReference type="CDD" id="cd02661">
    <property type="entry name" value="Peptidase_C19E"/>
    <property type="match status" value="1"/>
</dbReference>
<dbReference type="FunFam" id="3.90.70.10:FF:000197">
    <property type="entry name" value="Ubiquitin carboxyl-terminal hydrolase 17-like protein E"/>
    <property type="match status" value="1"/>
</dbReference>
<dbReference type="Gene3D" id="3.90.70.10">
    <property type="entry name" value="Cysteine proteinases"/>
    <property type="match status" value="1"/>
</dbReference>
<dbReference type="InterPro" id="IPR038765">
    <property type="entry name" value="Papain-like_cys_pep_sf"/>
</dbReference>
<dbReference type="InterPro" id="IPR050164">
    <property type="entry name" value="Peptidase_C19"/>
</dbReference>
<dbReference type="InterPro" id="IPR001394">
    <property type="entry name" value="Peptidase_C19_UCH"/>
</dbReference>
<dbReference type="InterPro" id="IPR018200">
    <property type="entry name" value="USP_CS"/>
</dbReference>
<dbReference type="InterPro" id="IPR028889">
    <property type="entry name" value="USP_dom"/>
</dbReference>
<dbReference type="PANTHER" id="PTHR24006:SF651">
    <property type="entry name" value="INACTIVE UBIQUITIN CARBOXYL-TERMINAL HYDROLASE 17-LIKE PROTEIN 4-RELATED"/>
    <property type="match status" value="1"/>
</dbReference>
<dbReference type="PANTHER" id="PTHR24006">
    <property type="entry name" value="UBIQUITIN CARBOXYL-TERMINAL HYDROLASE"/>
    <property type="match status" value="1"/>
</dbReference>
<dbReference type="Pfam" id="PF00443">
    <property type="entry name" value="UCH"/>
    <property type="match status" value="1"/>
</dbReference>
<dbReference type="SUPFAM" id="SSF54001">
    <property type="entry name" value="Cysteine proteinases"/>
    <property type="match status" value="1"/>
</dbReference>
<dbReference type="PROSITE" id="PS00972">
    <property type="entry name" value="USP_1"/>
    <property type="match status" value="1"/>
</dbReference>
<dbReference type="PROSITE" id="PS00973">
    <property type="entry name" value="USP_2"/>
    <property type="match status" value="1"/>
</dbReference>
<dbReference type="PROSITE" id="PS50235">
    <property type="entry name" value="USP_3"/>
    <property type="match status" value="1"/>
</dbReference>
<comment type="function">
    <text evidence="4 5">Deubiquitinating enzyme that removes conjugated ubiquitin from specific proteins to regulate different cellular processes. Has deubiquitinating enzyme activity for DNAH5, suggesting a role in the regulation of DNAH5 degradation by the ubiquitin-proteasome pathway. Has growth-suppressing activity; induces arrest in G1 phase upon controlled expression.</text>
</comment>
<comment type="catalytic activity">
    <reaction evidence="5">
        <text>Thiol-dependent hydrolysis of ester, thioester, amide, peptide and isopeptide bonds formed by the C-terminal Gly of ubiquitin (a 76-residue protein attached to proteins as an intracellular targeting signal).</text>
        <dbReference type="EC" id="3.4.19.12"/>
    </reaction>
</comment>
<comment type="tissue specificity">
    <text evidence="6">Expressed in hematopoietic progenitor cell lines Ba/F3 and FDCP1. Not detected in brain, lung, liver, kidney, thymus, spleen and bone marrow.</text>
</comment>
<comment type="induction">
    <text evidence="5 6">Up-regulated by IL3, IL5 and CSF2.</text>
</comment>
<comment type="PTM">
    <text evidence="4">Polyubiquitinated; ubiquitination leads to its subsequent degradation.</text>
</comment>
<comment type="similarity">
    <text evidence="7">Belongs to the peptidase C19 family.</text>
</comment>
<organism>
    <name type="scientific">Mus musculus</name>
    <name type="common">Mouse</name>
    <dbReference type="NCBI Taxonomy" id="10090"/>
    <lineage>
        <taxon>Eukaryota</taxon>
        <taxon>Metazoa</taxon>
        <taxon>Chordata</taxon>
        <taxon>Craniata</taxon>
        <taxon>Vertebrata</taxon>
        <taxon>Euteleostomi</taxon>
        <taxon>Mammalia</taxon>
        <taxon>Eutheria</taxon>
        <taxon>Euarchontoglires</taxon>
        <taxon>Glires</taxon>
        <taxon>Rodentia</taxon>
        <taxon>Myomorpha</taxon>
        <taxon>Muroidea</taxon>
        <taxon>Muridae</taxon>
        <taxon>Murinae</taxon>
        <taxon>Mus</taxon>
        <taxon>Mus</taxon>
    </lineage>
</organism>
<name>U17PA_MOUSE</name>
<gene>
    <name type="primary">Usp17la</name>
    <name type="synonym">Dub-1</name>
    <name type="synonym">Dub1</name>
</gene>
<reference key="1">
    <citation type="journal article" date="1996" name="Mol. Cell. Biol.">
        <title>The murine DUB-1 gene is specifically induced by the betac subunit of interleukin-3 receptor.</title>
        <authorList>
            <person name="Zhu Y."/>
            <person name="Pless M."/>
            <person name="Inhorn R."/>
            <person name="Mathey-Prevot B."/>
            <person name="D'Andrea A.D."/>
        </authorList>
    </citation>
    <scope>NUCLEOTIDE SEQUENCE [GENOMIC DNA]</scope>
    <scope>TISSUE SPECIFICITY</scope>
    <scope>INDUCTION</scope>
</reference>
<reference key="2">
    <citation type="journal article" date="1996" name="Proc. Natl. Acad. Sci. U.S.A.">
        <title>DUB-1, a deubiquitinating enzyme with growth-suppressing activity.</title>
        <authorList>
            <person name="Zhu Y."/>
            <person name="Carroll M."/>
            <person name="Papa F.R."/>
            <person name="Hochstrasser M."/>
            <person name="D'Andrea A.D."/>
        </authorList>
    </citation>
    <scope>NUCLEOTIDE SEQUENCE [MRNA]</scope>
    <scope>FUNCTION</scope>
    <scope>CATALYTIC ACTIVITY</scope>
    <scope>INDUCTION</scope>
    <scope>MUTAGENESIS OF CYS-60</scope>
</reference>
<reference key="3">
    <citation type="journal article" date="2008" name="J. Cell. Biochem.">
        <title>DUB-1, a fate determinant of dynein heavy chain in B-lymphocytes, is regulated by the ubiquitin-proteasome pathway.</title>
        <authorList>
            <person name="Lee M.Y."/>
            <person name="Ajjappala B.S."/>
            <person name="Kim M.S."/>
            <person name="Oh Y.K."/>
            <person name="Baek K.H."/>
        </authorList>
    </citation>
    <scope>FUNCTION</scope>
    <scope>INTERACTION WITH DNAH5</scope>
    <scope>UBIQUITINATION</scope>
</reference>
<evidence type="ECO:0000255" key="1">
    <source>
        <dbReference type="PROSITE-ProRule" id="PRU10092"/>
    </source>
</evidence>
<evidence type="ECO:0000255" key="2">
    <source>
        <dbReference type="PROSITE-ProRule" id="PRU10093"/>
    </source>
</evidence>
<evidence type="ECO:0000256" key="3">
    <source>
        <dbReference type="SAM" id="MobiDB-lite"/>
    </source>
</evidence>
<evidence type="ECO:0000269" key="4">
    <source>
    </source>
</evidence>
<evidence type="ECO:0000269" key="5">
    <source>
    </source>
</evidence>
<evidence type="ECO:0000269" key="6">
    <source>
    </source>
</evidence>
<evidence type="ECO:0000305" key="7"/>
<accession>Q61068</accession>